<name>LIN32_CAEEL</name>
<dbReference type="EMBL" id="U15418">
    <property type="protein sequence ID" value="AAA67360.1"/>
    <property type="status" value="ALT_SEQ"/>
    <property type="molecule type" value="Genomic_DNA"/>
</dbReference>
<dbReference type="EMBL" id="BX284606">
    <property type="protein sequence ID" value="CCD68944.1"/>
    <property type="molecule type" value="Genomic_DNA"/>
</dbReference>
<dbReference type="PIR" id="T29378">
    <property type="entry name" value="T29378"/>
</dbReference>
<dbReference type="RefSeq" id="NP_508410.2">
    <property type="nucleotide sequence ID" value="NM_076009.2"/>
</dbReference>
<dbReference type="SMR" id="Q10574"/>
<dbReference type="BioGRID" id="56200">
    <property type="interactions" value="2"/>
</dbReference>
<dbReference type="FunCoup" id="Q10574">
    <property type="interactions" value="141"/>
</dbReference>
<dbReference type="IntAct" id="Q10574">
    <property type="interactions" value="2"/>
</dbReference>
<dbReference type="STRING" id="6239.T14F9.5.1"/>
<dbReference type="PaxDb" id="6239-T14F9.5"/>
<dbReference type="EnsemblMetazoa" id="T14F9.5.1">
    <property type="protein sequence ID" value="T14F9.5.1"/>
    <property type="gene ID" value="WBGene00003018"/>
</dbReference>
<dbReference type="GeneID" id="191703"/>
<dbReference type="KEGG" id="cel:CELE_T14F9.5"/>
<dbReference type="UCSC" id="T14F9.5">
    <property type="organism name" value="c. elegans"/>
</dbReference>
<dbReference type="AGR" id="WB:WBGene00003018"/>
<dbReference type="CTD" id="191703"/>
<dbReference type="WormBase" id="T14F9.5">
    <property type="protein sequence ID" value="CE33318"/>
    <property type="gene ID" value="WBGene00003018"/>
    <property type="gene designation" value="lin-32"/>
</dbReference>
<dbReference type="eggNOG" id="KOG4395">
    <property type="taxonomic scope" value="Eukaryota"/>
</dbReference>
<dbReference type="GeneTree" id="ENSGT00940000168200"/>
<dbReference type="HOGENOM" id="CLU_1798134_0_0_1"/>
<dbReference type="InParanoid" id="Q10574"/>
<dbReference type="OMA" id="KKKCRRY"/>
<dbReference type="OrthoDB" id="6161578at2759"/>
<dbReference type="PRO" id="PR:Q10574"/>
<dbReference type="Proteomes" id="UP000001940">
    <property type="component" value="Chromosome X"/>
</dbReference>
<dbReference type="Bgee" id="WBGene00003018">
    <property type="expression patterns" value="Expressed in embryo and 3 other cell types or tissues"/>
</dbReference>
<dbReference type="GO" id="GO:0005634">
    <property type="term" value="C:nucleus"/>
    <property type="evidence" value="ECO:0000314"/>
    <property type="project" value="WormBase"/>
</dbReference>
<dbReference type="GO" id="GO:0000981">
    <property type="term" value="F:DNA-binding transcription factor activity, RNA polymerase II-specific"/>
    <property type="evidence" value="ECO:0000318"/>
    <property type="project" value="GO_Central"/>
</dbReference>
<dbReference type="GO" id="GO:0070888">
    <property type="term" value="F:E-box binding"/>
    <property type="evidence" value="ECO:0000318"/>
    <property type="project" value="GO_Central"/>
</dbReference>
<dbReference type="GO" id="GO:0046982">
    <property type="term" value="F:protein heterodimerization activity"/>
    <property type="evidence" value="ECO:0000353"/>
    <property type="project" value="WormBase"/>
</dbReference>
<dbReference type="GO" id="GO:0042803">
    <property type="term" value="F:protein homodimerization activity"/>
    <property type="evidence" value="ECO:0000353"/>
    <property type="project" value="WormBase"/>
</dbReference>
<dbReference type="GO" id="GO:0043565">
    <property type="term" value="F:sequence-specific DNA binding"/>
    <property type="evidence" value="ECO:0000314"/>
    <property type="project" value="WormBase"/>
</dbReference>
<dbReference type="GO" id="GO:0061564">
    <property type="term" value="P:axon development"/>
    <property type="evidence" value="ECO:0000318"/>
    <property type="project" value="GO_Central"/>
</dbReference>
<dbReference type="GO" id="GO:0009792">
    <property type="term" value="P:embryo development ending in birth or egg hatching"/>
    <property type="evidence" value="ECO:0000315"/>
    <property type="project" value="WormBase"/>
</dbReference>
<dbReference type="GO" id="GO:0003398">
    <property type="term" value="P:glial cell differentiation involved in amphid sensory organ development"/>
    <property type="evidence" value="ECO:0000315"/>
    <property type="project" value="UniProtKB"/>
</dbReference>
<dbReference type="GO" id="GO:0021780">
    <property type="term" value="P:glial cell fate specification"/>
    <property type="evidence" value="ECO:0000315"/>
    <property type="project" value="UniProtKB"/>
</dbReference>
<dbReference type="GO" id="GO:0051179">
    <property type="term" value="P:localization"/>
    <property type="evidence" value="ECO:0000315"/>
    <property type="project" value="WormBase"/>
</dbReference>
<dbReference type="GO" id="GO:0014014">
    <property type="term" value="P:negative regulation of gliogenesis"/>
    <property type="evidence" value="ECO:0000315"/>
    <property type="project" value="UniProtKB"/>
</dbReference>
<dbReference type="GO" id="GO:0045138">
    <property type="term" value="P:nematode male tail tip morphogenesis"/>
    <property type="evidence" value="ECO:0000315"/>
    <property type="project" value="WormBase"/>
</dbReference>
<dbReference type="GO" id="GO:0048666">
    <property type="term" value="P:neuron development"/>
    <property type="evidence" value="ECO:0000315"/>
    <property type="project" value="UniProtKB"/>
</dbReference>
<dbReference type="GO" id="GO:0048663">
    <property type="term" value="P:neuron fate commitment"/>
    <property type="evidence" value="ECO:0000318"/>
    <property type="project" value="GO_Central"/>
</dbReference>
<dbReference type="GO" id="GO:0048665">
    <property type="term" value="P:neuron fate specification"/>
    <property type="evidence" value="ECO:0000315"/>
    <property type="project" value="UniProtKB"/>
</dbReference>
<dbReference type="GO" id="GO:0045944">
    <property type="term" value="P:positive regulation of transcription by RNA polymerase II"/>
    <property type="evidence" value="ECO:0000318"/>
    <property type="project" value="GO_Central"/>
</dbReference>
<dbReference type="GO" id="GO:0007423">
    <property type="term" value="P:sensory organ development"/>
    <property type="evidence" value="ECO:0000318"/>
    <property type="project" value="GO_Central"/>
</dbReference>
<dbReference type="CDD" id="cd11430">
    <property type="entry name" value="bHLH_TS_ATOH1_like"/>
    <property type="match status" value="1"/>
</dbReference>
<dbReference type="Gene3D" id="4.10.280.10">
    <property type="entry name" value="Helix-loop-helix DNA-binding domain"/>
    <property type="match status" value="1"/>
</dbReference>
<dbReference type="InterPro" id="IPR011598">
    <property type="entry name" value="bHLH_dom"/>
</dbReference>
<dbReference type="InterPro" id="IPR050359">
    <property type="entry name" value="bHLH_transcription_factors"/>
</dbReference>
<dbReference type="InterPro" id="IPR036638">
    <property type="entry name" value="HLH_DNA-bd_sf"/>
</dbReference>
<dbReference type="PANTHER" id="PTHR19290">
    <property type="entry name" value="BASIC HELIX-LOOP-HELIX PROTEIN NEUROGENIN-RELATED"/>
    <property type="match status" value="1"/>
</dbReference>
<dbReference type="PANTHER" id="PTHR19290:SF162">
    <property type="entry name" value="TRANSCRIPTION FACTOR ATOH7"/>
    <property type="match status" value="1"/>
</dbReference>
<dbReference type="Pfam" id="PF00010">
    <property type="entry name" value="HLH"/>
    <property type="match status" value="1"/>
</dbReference>
<dbReference type="SMART" id="SM00353">
    <property type="entry name" value="HLH"/>
    <property type="match status" value="1"/>
</dbReference>
<dbReference type="SUPFAM" id="SSF47459">
    <property type="entry name" value="HLH, helix-loop-helix DNA-binding domain"/>
    <property type="match status" value="1"/>
</dbReference>
<dbReference type="PROSITE" id="PS50888">
    <property type="entry name" value="BHLH"/>
    <property type="match status" value="1"/>
</dbReference>
<sequence>MSWEQYQMYVPQCHPSFMYQGSIQSTMTTPLQSPNFSLDSPNYPDSLSNGGGKDDKKKCRRYKTPSPQLLRMRRSAANERERRRMNTLNVAYDELREVLPEIDSGKKLSKFETLQMAQKYIECLSQILKQDSKNENLKSKSG</sequence>
<evidence type="ECO:0000255" key="1">
    <source>
        <dbReference type="PROSITE-ProRule" id="PRU00981"/>
    </source>
</evidence>
<evidence type="ECO:0000256" key="2">
    <source>
        <dbReference type="SAM" id="MobiDB-lite"/>
    </source>
</evidence>
<evidence type="ECO:0000269" key="3">
    <source>
    </source>
</evidence>
<evidence type="ECO:0000269" key="4">
    <source>
    </source>
</evidence>
<evidence type="ECO:0000269" key="5">
    <source>
    </source>
</evidence>
<evidence type="ECO:0000269" key="6">
    <source>
    </source>
</evidence>
<evidence type="ECO:0000305" key="7"/>
<evidence type="ECO:0000312" key="8">
    <source>
        <dbReference type="WormBase" id="T14F9.5"/>
    </source>
</evidence>
<organism>
    <name type="scientific">Caenorhabditis elegans</name>
    <dbReference type="NCBI Taxonomy" id="6239"/>
    <lineage>
        <taxon>Eukaryota</taxon>
        <taxon>Metazoa</taxon>
        <taxon>Ecdysozoa</taxon>
        <taxon>Nematoda</taxon>
        <taxon>Chromadorea</taxon>
        <taxon>Rhabditida</taxon>
        <taxon>Rhabditina</taxon>
        <taxon>Rhabditomorpha</taxon>
        <taxon>Rhabditoidea</taxon>
        <taxon>Rhabditidae</taxon>
        <taxon>Peloderinae</taxon>
        <taxon>Caenorhabditis</taxon>
    </lineage>
</organism>
<accession>Q10574</accession>
<comment type="function">
    <text evidence="3 4 5 6">Probable transcription factor which binds the E box motif 5'-CA[TC][AG]TG-3' (PubMed:11076762). Essential for the specification of the neuroblast cell fate in the development of peripheral sense organs (PubMed:7800042). Its role in the generation of sensory neurons may be through positively regulating the expression of the zinc finger protein ztf-11 during postdeirid neurogenesis (PubMed:31386623). Required for specification of cell fate, acting in concert with lin-32, in the development of the male-specific genital sensilla (simple sense organs) known as rays (PubMed:11076762). Involved in regulating glial specification, perhaps by suppressing a glial fate in different lineages during early embryogenesis (PubMed:32665354).</text>
</comment>
<comment type="subunit">
    <text evidence="3">Forms a heterodimer with hlh-2.</text>
</comment>
<comment type="subcellular location">
    <subcellularLocation>
        <location evidence="4 6">Nucleus</location>
    </subcellularLocation>
</comment>
<comment type="tissue specificity">
    <text evidence="4">Expressed in PVD motor neurons.</text>
</comment>
<comment type="developmental stage">
    <text evidence="3 4">Expressed in V5 postdeirid lineage cells in L2 larvae (PubMed:31386623). Expressed in the nine ray lineage Rn.a neuroblasts and their progeny, Rn.aa and Rn.ap (PubMed:11076762).</text>
</comment>
<comment type="disruption phenotype">
    <text evidence="5">Knockout results in ectopic AMsh glial cells and also ectopic amphid socket (AMso) cells, another type of glia, from a different cell lineage (PubMed:32665354). Some animals are missing dorsal, but not ventral, CEPsh glial cells (PubMed:32665354). Mean number of ectopic AMsh glial cells increases on cnd-1 or ngn-1 mutant backgrounds (PubMed:32665354).</text>
</comment>
<comment type="sequence caution" evidence="7">
    <conflict type="erroneous gene model prediction">
        <sequence resource="EMBL-CDS" id="AAA67360"/>
    </conflict>
</comment>
<protein>
    <recommendedName>
        <fullName>Protein lin-32</fullName>
    </recommendedName>
    <alternativeName>
        <fullName>Abnormal cell lineage protein 32</fullName>
    </alternativeName>
</protein>
<feature type="chain" id="PRO_0000127261" description="Protein lin-32">
    <location>
        <begin position="1"/>
        <end position="142"/>
    </location>
</feature>
<feature type="domain" description="bHLH" evidence="1">
    <location>
        <begin position="72"/>
        <end position="124"/>
    </location>
</feature>
<feature type="region of interest" description="Disordered" evidence="2">
    <location>
        <begin position="30"/>
        <end position="66"/>
    </location>
</feature>
<feature type="compositionally biased region" description="Polar residues" evidence="2">
    <location>
        <begin position="30"/>
        <end position="48"/>
    </location>
</feature>
<feature type="mutagenesis site" description="In u282; 99% loss of the male-specific genital sensilla (simple sense organs) known as rays, and tail touch insensitivity." evidence="3 6">
    <original>E</original>
    <variation>K</variation>
    <location>
        <position position="81"/>
    </location>
</feature>
<feature type="mutagenesis site" description="In e1926; aberrant development of all three cell types forming the male-specific genital sensilla (simple sense organs) known as rays. 81% ray loss. Ray loss phenotype exacerbated on hlh-2 mutant background. Drastically reduces binding to DNA as a heterodimer with hlh-2." evidence="3 6">
    <original>L</original>
    <variation>F</variation>
    <location>
        <position position="95"/>
    </location>
</feature>
<proteinExistence type="evidence at protein level"/>
<reference key="1">
    <citation type="journal article" date="1995" name="Nature">
        <title>A transcription factor controlling development of peripheral sense organs in C. elegans.</title>
        <authorList>
            <person name="Zhao C."/>
            <person name="Emmons S.W."/>
        </authorList>
    </citation>
    <scope>NUCLEOTIDE SEQUENCE [GENOMIC DNA]</scope>
    <scope>FUNCTION</scope>
    <scope>SUBCELLULAR LOCATION</scope>
    <scope>MUTAGENESIS OF GLU-81 AND LEU-95</scope>
    <source>
        <strain>Bristol N2</strain>
    </source>
</reference>
<reference key="2">
    <citation type="journal article" date="1998" name="Science">
        <title>Genome sequence of the nematode C. elegans: a platform for investigating biology.</title>
        <authorList>
            <consortium name="The C. elegans sequencing consortium"/>
        </authorList>
    </citation>
    <scope>NUCLEOTIDE SEQUENCE [LARGE SCALE GENOMIC DNA]</scope>
    <source>
        <strain>Bristol N2</strain>
    </source>
</reference>
<reference key="3">
    <citation type="journal article" date="2000" name="Development">
        <title>The basic helix-loop-helix transcription factors LIN-32 and HLH-2 function together in multiple steps of a C. elegans neuronal sublineage.</title>
        <authorList>
            <person name="Portman D.S."/>
            <person name="Emmons S.W."/>
        </authorList>
    </citation>
    <scope>FUNCTION</scope>
    <scope>INTERACTION WITH HLH-2</scope>
    <scope>DEVELOPMENTAL STAGE</scope>
    <scope>MUTAGENESIS OF GLU-81 AND LEU-95</scope>
</reference>
<reference key="4">
    <citation type="journal article" date="2019" name="Elife">
        <title>A Myt1 family transcription factor defines neuronal fate by repressing non-neuronal genes.</title>
        <authorList>
            <person name="Lee J."/>
            <person name="Taylor C.A."/>
            <person name="Barnes K.M."/>
            <person name="Shen A."/>
            <person name="Stewart E.V."/>
            <person name="Chen A."/>
            <person name="Xiang Y.K."/>
            <person name="Bao Z."/>
            <person name="Shen K."/>
        </authorList>
    </citation>
    <scope>FUNCTION</scope>
    <scope>SUBCELLULAR LOCATION</scope>
    <scope>TISSUE SPECIFICITY</scope>
    <scope>DEVELOPMENTAL STAGE</scope>
</reference>
<reference key="5">
    <citation type="journal article" date="2020" name="G3 (Bethesda)">
        <title>Regulation of Gliogenesis by lin-32/Atoh1 in Caenorhabditis elegans.</title>
        <authorList>
            <person name="Zhang A."/>
            <person name="Noma K."/>
            <person name="Yan D."/>
        </authorList>
    </citation>
    <scope>FUNCTION</scope>
    <scope>DISRUPTION PHENOTYPE</scope>
</reference>
<gene>
    <name evidence="8" type="primary">lin-32</name>
    <name evidence="8" type="synonym">hlh-7</name>
    <name evidence="8" type="ORF">T14F9.5</name>
</gene>
<keyword id="KW-0217">Developmental protein</keyword>
<keyword id="KW-0221">Differentiation</keyword>
<keyword id="KW-0238">DNA-binding</keyword>
<keyword id="KW-0524">Neurogenesis</keyword>
<keyword id="KW-0539">Nucleus</keyword>
<keyword id="KW-1185">Reference proteome</keyword>